<accession>P0AAM9</accession>
<accession>P37185</accession>
<feature type="chain" id="PRO_0000201404" description="Hydrogenase maturation factor HybG">
    <location>
        <begin position="1"/>
        <end position="82"/>
    </location>
</feature>
<feature type="site" description="Important for interaction with HypD and the precursor form of hydrogenase" evidence="1">
    <location>
        <position position="2"/>
    </location>
</feature>
<keyword id="KW-1185">Reference proteome</keyword>
<proteinExistence type="inferred from homology"/>
<evidence type="ECO:0000250" key="1">
    <source>
        <dbReference type="UniProtKB" id="P0AAM3"/>
    </source>
</evidence>
<evidence type="ECO:0000250" key="2">
    <source>
        <dbReference type="UniProtKB" id="P0AAM7"/>
    </source>
</evidence>
<evidence type="ECO:0000305" key="3"/>
<gene>
    <name type="primary">hybG</name>
    <name type="ordered locus">Z4344</name>
    <name type="ordered locus">ECs3875</name>
</gene>
<organism>
    <name type="scientific">Escherichia coli O157:H7</name>
    <dbReference type="NCBI Taxonomy" id="83334"/>
    <lineage>
        <taxon>Bacteria</taxon>
        <taxon>Pseudomonadati</taxon>
        <taxon>Pseudomonadota</taxon>
        <taxon>Gammaproteobacteria</taxon>
        <taxon>Enterobacterales</taxon>
        <taxon>Enterobacteriaceae</taxon>
        <taxon>Escherichia</taxon>
    </lineage>
</organism>
<protein>
    <recommendedName>
        <fullName evidence="2">Hydrogenase maturation factor HybG</fullName>
    </recommendedName>
</protein>
<sequence length="82" mass="8808">MCIGVPGQVLAVGEDIHQLAQVEVCGIKRDVNIALICEGNPADLLGQWVLVHVGFAMSIIDEDEAKATLDALRQMDYDITSA</sequence>
<dbReference type="EMBL" id="AE005174">
    <property type="protein sequence ID" value="AAG58127.1"/>
    <property type="molecule type" value="Genomic_DNA"/>
</dbReference>
<dbReference type="EMBL" id="BA000007">
    <property type="protein sequence ID" value="BAB37298.1"/>
    <property type="molecule type" value="Genomic_DNA"/>
</dbReference>
<dbReference type="PIR" id="C85958">
    <property type="entry name" value="C85958"/>
</dbReference>
<dbReference type="PIR" id="C91113">
    <property type="entry name" value="C91113"/>
</dbReference>
<dbReference type="RefSeq" id="NP_311902.1">
    <property type="nucleotide sequence ID" value="NC_002695.1"/>
</dbReference>
<dbReference type="RefSeq" id="WP_000334896.1">
    <property type="nucleotide sequence ID" value="NZ_VOAI01000009.1"/>
</dbReference>
<dbReference type="SMR" id="P0AAM9"/>
<dbReference type="STRING" id="155864.Z4344"/>
<dbReference type="GeneID" id="916301"/>
<dbReference type="GeneID" id="93778995"/>
<dbReference type="KEGG" id="ece:Z4344"/>
<dbReference type="KEGG" id="ecs:ECs_3875"/>
<dbReference type="PATRIC" id="fig|386585.9.peg.4042"/>
<dbReference type="eggNOG" id="COG0298">
    <property type="taxonomic scope" value="Bacteria"/>
</dbReference>
<dbReference type="HOGENOM" id="CLU_159381_1_1_6"/>
<dbReference type="OMA" id="EEFGDPW"/>
<dbReference type="UniPathway" id="UPA00335"/>
<dbReference type="Proteomes" id="UP000000558">
    <property type="component" value="Chromosome"/>
</dbReference>
<dbReference type="Proteomes" id="UP000002519">
    <property type="component" value="Chromosome"/>
</dbReference>
<dbReference type="GO" id="GO:1902670">
    <property type="term" value="F:carbon dioxide binding"/>
    <property type="evidence" value="ECO:0007669"/>
    <property type="project" value="TreeGrafter"/>
</dbReference>
<dbReference type="GO" id="GO:0005506">
    <property type="term" value="F:iron ion binding"/>
    <property type="evidence" value="ECO:0007669"/>
    <property type="project" value="TreeGrafter"/>
</dbReference>
<dbReference type="GO" id="GO:0051604">
    <property type="term" value="P:protein maturation"/>
    <property type="evidence" value="ECO:0007669"/>
    <property type="project" value="TreeGrafter"/>
</dbReference>
<dbReference type="FunFam" id="2.30.30.140:FF:000022">
    <property type="entry name" value="Hydrogenase assembly chaperone HybG"/>
    <property type="match status" value="1"/>
</dbReference>
<dbReference type="Gene3D" id="2.30.30.140">
    <property type="match status" value="1"/>
</dbReference>
<dbReference type="InterPro" id="IPR019812">
    <property type="entry name" value="Hydgase_assmbl_chp_CS"/>
</dbReference>
<dbReference type="InterPro" id="IPR001109">
    <property type="entry name" value="Hydrogenase_HupF/HypC"/>
</dbReference>
<dbReference type="NCBIfam" id="TIGR00074">
    <property type="entry name" value="hypC_hupF"/>
    <property type="match status" value="1"/>
</dbReference>
<dbReference type="NCBIfam" id="NF007721">
    <property type="entry name" value="PRK10413.1"/>
    <property type="match status" value="1"/>
</dbReference>
<dbReference type="PANTHER" id="PTHR35177">
    <property type="entry name" value="HYDROGENASE MATURATION FACTOR HYBG"/>
    <property type="match status" value="1"/>
</dbReference>
<dbReference type="PANTHER" id="PTHR35177:SF2">
    <property type="entry name" value="HYDROGENASE MATURATION FACTOR HYBG"/>
    <property type="match status" value="1"/>
</dbReference>
<dbReference type="Pfam" id="PF01455">
    <property type="entry name" value="HupF_HypC"/>
    <property type="match status" value="1"/>
</dbReference>
<dbReference type="PRINTS" id="PR00445">
    <property type="entry name" value="HUPFHYPC"/>
</dbReference>
<dbReference type="SUPFAM" id="SSF159127">
    <property type="entry name" value="HupF/HypC-like"/>
    <property type="match status" value="1"/>
</dbReference>
<dbReference type="PROSITE" id="PS01097">
    <property type="entry name" value="HUPF_HYPC"/>
    <property type="match status" value="1"/>
</dbReference>
<reference key="1">
    <citation type="journal article" date="2001" name="Nature">
        <title>Genome sequence of enterohaemorrhagic Escherichia coli O157:H7.</title>
        <authorList>
            <person name="Perna N.T."/>
            <person name="Plunkett G. III"/>
            <person name="Burland V."/>
            <person name="Mau B."/>
            <person name="Glasner J.D."/>
            <person name="Rose D.J."/>
            <person name="Mayhew G.F."/>
            <person name="Evans P.S."/>
            <person name="Gregor J."/>
            <person name="Kirkpatrick H.A."/>
            <person name="Posfai G."/>
            <person name="Hackett J."/>
            <person name="Klink S."/>
            <person name="Boutin A."/>
            <person name="Shao Y."/>
            <person name="Miller L."/>
            <person name="Grotbeck E.J."/>
            <person name="Davis N.W."/>
            <person name="Lim A."/>
            <person name="Dimalanta E.T."/>
            <person name="Potamousis K."/>
            <person name="Apodaca J."/>
            <person name="Anantharaman T.S."/>
            <person name="Lin J."/>
            <person name="Yen G."/>
            <person name="Schwartz D.C."/>
            <person name="Welch R.A."/>
            <person name="Blattner F.R."/>
        </authorList>
    </citation>
    <scope>NUCLEOTIDE SEQUENCE [LARGE SCALE GENOMIC DNA]</scope>
    <source>
        <strain>O157:H7 / EDL933 / ATCC 700927 / EHEC</strain>
    </source>
</reference>
<reference key="2">
    <citation type="journal article" date="2001" name="DNA Res.">
        <title>Complete genome sequence of enterohemorrhagic Escherichia coli O157:H7 and genomic comparison with a laboratory strain K-12.</title>
        <authorList>
            <person name="Hayashi T."/>
            <person name="Makino K."/>
            <person name="Ohnishi M."/>
            <person name="Kurokawa K."/>
            <person name="Ishii K."/>
            <person name="Yokoyama K."/>
            <person name="Han C.-G."/>
            <person name="Ohtsubo E."/>
            <person name="Nakayama K."/>
            <person name="Murata T."/>
            <person name="Tanaka M."/>
            <person name="Tobe T."/>
            <person name="Iida T."/>
            <person name="Takami H."/>
            <person name="Honda T."/>
            <person name="Sasakawa C."/>
            <person name="Ogasawara N."/>
            <person name="Yasunaga T."/>
            <person name="Kuhara S."/>
            <person name="Shiba T."/>
            <person name="Hattori M."/>
            <person name="Shinagawa H."/>
        </authorList>
    </citation>
    <scope>NUCLEOTIDE SEQUENCE [LARGE SCALE GENOMIC DNA]</scope>
    <source>
        <strain>O157:H7 / Sakai / RIMD 0509952 / EHEC</strain>
    </source>
</reference>
<name>HYBG_ECO57</name>
<comment type="function">
    <text evidence="2">Involved in the maturation of [NiFe] hydrogenases. Involved in the biosynthesis of the Fe(CN)(2)CO cofactor. HybG delivers iron-bound CO(2) to HypD where reduction to CO probably occurs. In complex with HypD, accepts the cyanide ligand generated by HypF and HypE, and also coordinates the carbon monoxide ligand.</text>
</comment>
<comment type="pathway">
    <text evidence="2">Protein modification; [NiFe] hydrogenase maturation.</text>
</comment>
<comment type="similarity">
    <text evidence="3">Belongs to the HupF/HypC family.</text>
</comment>